<reference key="1">
    <citation type="submission" date="2008-04" db="EMBL/GenBank/DDBJ databases">
        <title>Complete sequence of Clostridium botulinum strain Eklund.</title>
        <authorList>
            <person name="Brinkac L.M."/>
            <person name="Brown J.L."/>
            <person name="Bruce D."/>
            <person name="Detter C."/>
            <person name="Munk C."/>
            <person name="Smith L.A."/>
            <person name="Smith T.J."/>
            <person name="Sutton G."/>
            <person name="Brettin T.S."/>
        </authorList>
    </citation>
    <scope>NUCLEOTIDE SEQUENCE [LARGE SCALE GENOMIC DNA]</scope>
    <source>
        <strain>Eklund 17B / Type B</strain>
    </source>
</reference>
<dbReference type="EC" id="5.4.99.12" evidence="1"/>
<dbReference type="EMBL" id="CP001056">
    <property type="protein sequence ID" value="ACD22731.1"/>
    <property type="molecule type" value="Genomic_DNA"/>
</dbReference>
<dbReference type="SMR" id="B2TIK9"/>
<dbReference type="KEGG" id="cbk:CLL_A0272"/>
<dbReference type="PATRIC" id="fig|935198.13.peg.247"/>
<dbReference type="HOGENOM" id="CLU_014673_0_1_9"/>
<dbReference type="Proteomes" id="UP000001195">
    <property type="component" value="Chromosome"/>
</dbReference>
<dbReference type="GO" id="GO:0003723">
    <property type="term" value="F:RNA binding"/>
    <property type="evidence" value="ECO:0007669"/>
    <property type="project" value="InterPro"/>
</dbReference>
<dbReference type="GO" id="GO:0160147">
    <property type="term" value="F:tRNA pseudouridine(38-40) synthase activity"/>
    <property type="evidence" value="ECO:0007669"/>
    <property type="project" value="UniProtKB-EC"/>
</dbReference>
<dbReference type="GO" id="GO:0031119">
    <property type="term" value="P:tRNA pseudouridine synthesis"/>
    <property type="evidence" value="ECO:0007669"/>
    <property type="project" value="UniProtKB-UniRule"/>
</dbReference>
<dbReference type="CDD" id="cd02570">
    <property type="entry name" value="PseudoU_synth_EcTruA"/>
    <property type="match status" value="1"/>
</dbReference>
<dbReference type="FunFam" id="3.30.70.580:FF:000001">
    <property type="entry name" value="tRNA pseudouridine synthase A"/>
    <property type="match status" value="1"/>
</dbReference>
<dbReference type="Gene3D" id="3.30.70.660">
    <property type="entry name" value="Pseudouridine synthase I, catalytic domain, C-terminal subdomain"/>
    <property type="match status" value="1"/>
</dbReference>
<dbReference type="Gene3D" id="3.30.70.580">
    <property type="entry name" value="Pseudouridine synthase I, catalytic domain, N-terminal subdomain"/>
    <property type="match status" value="1"/>
</dbReference>
<dbReference type="HAMAP" id="MF_00171">
    <property type="entry name" value="TruA"/>
    <property type="match status" value="1"/>
</dbReference>
<dbReference type="InterPro" id="IPR020103">
    <property type="entry name" value="PsdUridine_synth_cat_dom_sf"/>
</dbReference>
<dbReference type="InterPro" id="IPR001406">
    <property type="entry name" value="PsdUridine_synth_TruA"/>
</dbReference>
<dbReference type="InterPro" id="IPR020097">
    <property type="entry name" value="PsdUridine_synth_TruA_a/b_dom"/>
</dbReference>
<dbReference type="InterPro" id="IPR020095">
    <property type="entry name" value="PsdUridine_synth_TruA_C"/>
</dbReference>
<dbReference type="InterPro" id="IPR020094">
    <property type="entry name" value="TruA/RsuA/RluB/E/F_N"/>
</dbReference>
<dbReference type="NCBIfam" id="TIGR00071">
    <property type="entry name" value="hisT_truA"/>
    <property type="match status" value="1"/>
</dbReference>
<dbReference type="PANTHER" id="PTHR11142">
    <property type="entry name" value="PSEUDOURIDYLATE SYNTHASE"/>
    <property type="match status" value="1"/>
</dbReference>
<dbReference type="PANTHER" id="PTHR11142:SF0">
    <property type="entry name" value="TRNA PSEUDOURIDINE SYNTHASE-LIKE 1"/>
    <property type="match status" value="1"/>
</dbReference>
<dbReference type="Pfam" id="PF01416">
    <property type="entry name" value="PseudoU_synth_1"/>
    <property type="match status" value="2"/>
</dbReference>
<dbReference type="PIRSF" id="PIRSF001430">
    <property type="entry name" value="tRNA_psdUrid_synth"/>
    <property type="match status" value="1"/>
</dbReference>
<dbReference type="SUPFAM" id="SSF55120">
    <property type="entry name" value="Pseudouridine synthase"/>
    <property type="match status" value="1"/>
</dbReference>
<gene>
    <name evidence="1" type="primary">truA</name>
    <name type="ordered locus">CLL_A0272</name>
</gene>
<accession>B2TIK9</accession>
<protein>
    <recommendedName>
        <fullName evidence="1">tRNA pseudouridine synthase A</fullName>
        <ecNumber evidence="1">5.4.99.12</ecNumber>
    </recommendedName>
    <alternativeName>
        <fullName evidence="1">tRNA pseudouridine(38-40) synthase</fullName>
    </alternativeName>
    <alternativeName>
        <fullName evidence="1">tRNA pseudouridylate synthase I</fullName>
    </alternativeName>
    <alternativeName>
        <fullName evidence="1">tRNA-uridine isomerase I</fullName>
    </alternativeName>
</protein>
<feature type="chain" id="PRO_1000097733" description="tRNA pseudouridine synthase A">
    <location>
        <begin position="1"/>
        <end position="244"/>
    </location>
</feature>
<feature type="active site" description="Nucleophile" evidence="1">
    <location>
        <position position="52"/>
    </location>
</feature>
<feature type="binding site" evidence="1">
    <location>
        <position position="110"/>
    </location>
    <ligand>
        <name>substrate</name>
    </ligand>
</feature>
<comment type="function">
    <text evidence="1">Formation of pseudouridine at positions 38, 39 and 40 in the anticodon stem and loop of transfer RNAs.</text>
</comment>
<comment type="catalytic activity">
    <reaction evidence="1">
        <text>uridine(38/39/40) in tRNA = pseudouridine(38/39/40) in tRNA</text>
        <dbReference type="Rhea" id="RHEA:22376"/>
        <dbReference type="Rhea" id="RHEA-COMP:10085"/>
        <dbReference type="Rhea" id="RHEA-COMP:10087"/>
        <dbReference type="ChEBI" id="CHEBI:65314"/>
        <dbReference type="ChEBI" id="CHEBI:65315"/>
        <dbReference type="EC" id="5.4.99.12"/>
    </reaction>
</comment>
<comment type="subunit">
    <text evidence="1">Homodimer.</text>
</comment>
<comment type="similarity">
    <text evidence="1">Belongs to the tRNA pseudouridine synthase TruA family.</text>
</comment>
<keyword id="KW-0413">Isomerase</keyword>
<keyword id="KW-0819">tRNA processing</keyword>
<evidence type="ECO:0000255" key="1">
    <source>
        <dbReference type="HAMAP-Rule" id="MF_00171"/>
    </source>
</evidence>
<name>TRUA_CLOBB</name>
<organism>
    <name type="scientific">Clostridium botulinum (strain Eklund 17B / Type B)</name>
    <dbReference type="NCBI Taxonomy" id="935198"/>
    <lineage>
        <taxon>Bacteria</taxon>
        <taxon>Bacillati</taxon>
        <taxon>Bacillota</taxon>
        <taxon>Clostridia</taxon>
        <taxon>Eubacteriales</taxon>
        <taxon>Clostridiaceae</taxon>
        <taxon>Clostridium</taxon>
    </lineage>
</organism>
<sequence>MRNIKLIIEFDGTNFCGWQRQIKDRTVQGCLEKAILKITGEKSLTNGSSRTDGGVHAKAMVANFITNSSIPGEKFREALNTKLPDDIAVIKSEEVDMDFHARYSSKGKMYSYTIVNRYEKLSFGKQYVHHVRKELNVEDMKKACECFIGKHDFKAFMSPGSSAKTTVRTIQEFYIEKNEDVIKIFISADGFLYNMVRIIVGTLINIGTGKTKLEDVDNIINDGIRKRSGMCVPPNGLVLEKVFY</sequence>
<proteinExistence type="inferred from homology"/>